<accession>Q8LF36</accession>
<accession>Q0V836</accession>
<accession>Q9FX52</accession>
<gene>
    <name type="primary">B'THETA</name>
    <name type="ordered locus">At1g13460</name>
    <name type="ORF">T6J4.19</name>
</gene>
<keyword id="KW-1070">Brassinosteroid signaling pathway</keyword>
<keyword id="KW-0963">Cytoplasm</keyword>
<keyword id="KW-0576">Peroxisome</keyword>
<keyword id="KW-1185">Reference proteome</keyword>
<reference key="1">
    <citation type="journal article" date="2000" name="Nature">
        <title>Sequence and analysis of chromosome 1 of the plant Arabidopsis thaliana.</title>
        <authorList>
            <person name="Theologis A."/>
            <person name="Ecker J.R."/>
            <person name="Palm C.J."/>
            <person name="Federspiel N.A."/>
            <person name="Kaul S."/>
            <person name="White O."/>
            <person name="Alonso J."/>
            <person name="Altafi H."/>
            <person name="Araujo R."/>
            <person name="Bowman C.L."/>
            <person name="Brooks S.Y."/>
            <person name="Buehler E."/>
            <person name="Chan A."/>
            <person name="Chao Q."/>
            <person name="Chen H."/>
            <person name="Cheuk R.F."/>
            <person name="Chin C.W."/>
            <person name="Chung M.K."/>
            <person name="Conn L."/>
            <person name="Conway A.B."/>
            <person name="Conway A.R."/>
            <person name="Creasy T.H."/>
            <person name="Dewar K."/>
            <person name="Dunn P."/>
            <person name="Etgu P."/>
            <person name="Feldblyum T.V."/>
            <person name="Feng J.-D."/>
            <person name="Fong B."/>
            <person name="Fujii C.Y."/>
            <person name="Gill J.E."/>
            <person name="Goldsmith A.D."/>
            <person name="Haas B."/>
            <person name="Hansen N.F."/>
            <person name="Hughes B."/>
            <person name="Huizar L."/>
            <person name="Hunter J.L."/>
            <person name="Jenkins J."/>
            <person name="Johnson-Hopson C."/>
            <person name="Khan S."/>
            <person name="Khaykin E."/>
            <person name="Kim C.J."/>
            <person name="Koo H.L."/>
            <person name="Kremenetskaia I."/>
            <person name="Kurtz D.B."/>
            <person name="Kwan A."/>
            <person name="Lam B."/>
            <person name="Langin-Hooper S."/>
            <person name="Lee A."/>
            <person name="Lee J.M."/>
            <person name="Lenz C.A."/>
            <person name="Li J.H."/>
            <person name="Li Y.-P."/>
            <person name="Lin X."/>
            <person name="Liu S.X."/>
            <person name="Liu Z.A."/>
            <person name="Luros J.S."/>
            <person name="Maiti R."/>
            <person name="Marziali A."/>
            <person name="Militscher J."/>
            <person name="Miranda M."/>
            <person name="Nguyen M."/>
            <person name="Nierman W.C."/>
            <person name="Osborne B.I."/>
            <person name="Pai G."/>
            <person name="Peterson J."/>
            <person name="Pham P.K."/>
            <person name="Rizzo M."/>
            <person name="Rooney T."/>
            <person name="Rowley D."/>
            <person name="Sakano H."/>
            <person name="Salzberg S.L."/>
            <person name="Schwartz J.R."/>
            <person name="Shinn P."/>
            <person name="Southwick A.M."/>
            <person name="Sun H."/>
            <person name="Tallon L.J."/>
            <person name="Tambunga G."/>
            <person name="Toriumi M.J."/>
            <person name="Town C.D."/>
            <person name="Utterback T."/>
            <person name="Van Aken S."/>
            <person name="Vaysberg M."/>
            <person name="Vysotskaia V.S."/>
            <person name="Walker M."/>
            <person name="Wu D."/>
            <person name="Yu G."/>
            <person name="Fraser C.M."/>
            <person name="Venter J.C."/>
            <person name="Davis R.W."/>
        </authorList>
    </citation>
    <scope>NUCLEOTIDE SEQUENCE [LARGE SCALE GENOMIC DNA]</scope>
    <source>
        <strain>cv. Columbia</strain>
    </source>
</reference>
<reference key="2">
    <citation type="journal article" date="2017" name="Plant J.">
        <title>Araport11: a complete reannotation of the Arabidopsis thaliana reference genome.</title>
        <authorList>
            <person name="Cheng C.Y."/>
            <person name="Krishnakumar V."/>
            <person name="Chan A.P."/>
            <person name="Thibaud-Nissen F."/>
            <person name="Schobel S."/>
            <person name="Town C.D."/>
        </authorList>
    </citation>
    <scope>GENOME REANNOTATION</scope>
    <source>
        <strain>cv. Columbia</strain>
    </source>
</reference>
<reference key="3">
    <citation type="submission" date="2006-08" db="EMBL/GenBank/DDBJ databases">
        <title>Arabidopsis ORF Clones.</title>
        <authorList>
            <person name="Quinitio C."/>
            <person name="Chen H."/>
            <person name="Kim C.J."/>
            <person name="Shinn P."/>
            <person name="Ecker J.R."/>
        </authorList>
    </citation>
    <scope>NUCLEOTIDE SEQUENCE [LARGE SCALE MRNA]</scope>
    <source>
        <strain>cv. Columbia</strain>
    </source>
</reference>
<reference key="4">
    <citation type="submission" date="2002-03" db="EMBL/GenBank/DDBJ databases">
        <title>Full-length cDNA from Arabidopsis thaliana.</title>
        <authorList>
            <person name="Brover V.V."/>
            <person name="Troukhan M.E."/>
            <person name="Alexandrov N.A."/>
            <person name="Lu Y.-P."/>
            <person name="Flavell R.B."/>
            <person name="Feldmann K.A."/>
        </authorList>
    </citation>
    <scope>NUCLEOTIDE SEQUENCE [LARGE SCALE MRNA]</scope>
</reference>
<reference key="5">
    <citation type="journal article" date="2002" name="Plant Physiol.">
        <title>Molecular characterization and evolution of the protein phosphatase 2A B' regulatory subunit family in plants.</title>
        <authorList>
            <person name="Terol J."/>
            <person name="Bargues M."/>
            <person name="Carrasco P."/>
            <person name="Perez-Alonso M."/>
            <person name="Paricio N."/>
        </authorList>
    </citation>
    <scope>NOMENCLATURE</scope>
</reference>
<reference key="6">
    <citation type="journal article" date="2009" name="Planta">
        <title>Diversity in subcellular targeting of the PP2A B'eta subfamily members.</title>
        <authorList>
            <person name="Matre P."/>
            <person name="Meyer C."/>
            <person name="Lillo C."/>
        </authorList>
    </citation>
    <scope>SUBCELLULAR LOCATION</scope>
    <scope>MUTAGENESIS OF 489-LYS--LEU-492</scope>
    <scope>DISRUPTION PHENOTYPE</scope>
</reference>
<reference key="7">
    <citation type="journal article" date="2011" name="Nat. Cell Biol.">
        <title>PP2A activates brassinosteroid-responsive gene expression and plant growth by dephosphorylating BZR1.</title>
        <authorList>
            <person name="Tang W."/>
            <person name="Yuan M."/>
            <person name="Wang R."/>
            <person name="Yang Y."/>
            <person name="Wang C."/>
            <person name="Oses-Prieto J.A."/>
            <person name="Kim T.W."/>
            <person name="Zhou H.W."/>
            <person name="Deng Z."/>
            <person name="Gampala S.S."/>
            <person name="Gendron J.M."/>
            <person name="Jonassen E.M."/>
            <person name="Lillo C."/>
            <person name="DeLong A."/>
            <person name="Burlingame A.L."/>
            <person name="Sun Y."/>
            <person name="Wang Z.Y."/>
        </authorList>
    </citation>
    <scope>INTERACTION WITH BZR1</scope>
</reference>
<reference key="8">
    <citation type="journal article" date="2015" name="Plant Physiol.">
        <title>Protein phosphatase 2A holoenzyme is targeted to peroxisomes by piggybacking and positively affects peroxisomal beta-oxidation.</title>
        <authorList>
            <person name="Kataya A.R."/>
            <person name="Heidari B."/>
            <person name="Hagen L."/>
            <person name="Kommedal R."/>
            <person name="Slupphaug G."/>
            <person name="Lillo C."/>
        </authorList>
    </citation>
    <scope>FUNCTION</scope>
    <scope>INTERACTION WITH PP2A2; PP2A5 AND PP2AA2</scope>
    <scope>SUBCELLULAR LOCATION</scope>
    <scope>TISSUE SPECIFICITY</scope>
</reference>
<reference key="9">
    <citation type="journal article" date="2016" name="Mol. Plant">
        <title>The brassinosteroid-activated BRI1 receptor kinase is switched off by dephosphorylation mediated by cytoplasm-localized PP2A B' subunits.</title>
        <authorList>
            <person name="Wang R."/>
            <person name="Liu M."/>
            <person name="Yuan M."/>
            <person name="Oses-Prieto J.A."/>
            <person name="Cai X."/>
            <person name="Sun Y."/>
            <person name="Burlingame A.L."/>
            <person name="Wang Z.Y."/>
            <person name="Tang W."/>
        </authorList>
    </citation>
    <scope>FUNCTION</scope>
    <scope>SUBCELLULAR LOCATION</scope>
    <scope>INDUCTION BY EPIBRASSINOLIDE</scope>
</reference>
<sequence length="492" mass="56510">MWKQILSKLPKKSSSKNHSSSSSSTSKSSDNGASKSGNSQTQNAPPVKPSADSGFKEGNLKGNGNGFTPYEALPGFKDVPNAEKQNLFVRKLSLCCVVFDFSDPTKNVKEKDIKRQTLLELVDYVASPNGKFSETVIQEVVRMVSVNIFRTLNPQPRENKVIDALDLEEEEPSMDPTWPHLQLVYEILLRLIASPETDTKLAKKYIDQSFVSRLLDLFDSEDPRERDCLKTVLHRIYGKFMVHRPFIRKSINNIFYRFVFETEKHNGIAEFLEILGSIINGFALPLKDEHKVFLVRALVPLHKPKSLQMYHQQLSYCITQFVEKDCKLADTVIRGLLKSWPVTNSSKEVMFLNELEEVLEATQPPEFQRCMVPLFRQVARCLNSLHFQVAERALFLWNNDHIENLIMQNRKVILPIIFPALERNTQKHWNQAVHSLTLNVQKIFNDIDAELFKDCLAKFREDESKEAEIGAKREATWKRLEEIGNQKQKSSL</sequence>
<comment type="function">
    <text evidence="1 5 6">The B regulatory subunit may modulate substrate selectivity and catalytic activity, and may also direct the localization of the catalytic enzyme to a particular subcellular compartment (By similarity). Associates with the serine/threonine-protein phosphatase PP2A catalytic subunit C and regulatory subunit A to positively regulates beta-oxidation of fatty acids and protoauxins in peroxisomes by dephosphorylating peroxisomal beta-oxidation-related proteins (PubMed:25489022). Required for the formation of the PP2A holoenzyme that negatively regulates brassinosteroid signaling by dephosphorylating and inactivating BRI1 in the cytoplasm (PubMed:26517938).</text>
</comment>
<comment type="subunit">
    <text evidence="1 4 5">PP2A consists of a common heteromeric enzyme, composed of a catalytic subunit (subunits C), a constant regulatory subunit (subunit A), and a variety of regulatory subunits such as subunits B (the R2/B/PR55/B55, R3/B''/PR72/PR130/PR59 and R5/B'/B56 families) (By similarity). Interacts with BZR1 (PubMed:21258370). Interacts with PP2A2, PP2A5 and PP2AA2 (PubMed:25489022).</text>
</comment>
<comment type="subcellular location">
    <subcellularLocation>
        <location evidence="5 6">Cytoplasm</location>
        <location evidence="5 6">Cytosol</location>
    </subcellularLocation>
    <subcellularLocation>
        <location evidence="3 5">Peroxisome</location>
    </subcellularLocation>
</comment>
<comment type="tissue specificity">
    <text evidence="5">Highly expressed in dry seeds. Expressed in roots, cotyledons, rosette leaves and flowers.</text>
</comment>
<comment type="induction">
    <text evidence="6">Induced by epibrassinolide.</text>
</comment>
<comment type="disruption phenotype">
    <text evidence="3">Reduced plant size and fresh weight.</text>
</comment>
<comment type="similarity">
    <text evidence="7">Belongs to the phosphatase 2A regulatory subunit B56 family.</text>
</comment>
<organism>
    <name type="scientific">Arabidopsis thaliana</name>
    <name type="common">Mouse-ear cress</name>
    <dbReference type="NCBI Taxonomy" id="3702"/>
    <lineage>
        <taxon>Eukaryota</taxon>
        <taxon>Viridiplantae</taxon>
        <taxon>Streptophyta</taxon>
        <taxon>Embryophyta</taxon>
        <taxon>Tracheophyta</taxon>
        <taxon>Spermatophyta</taxon>
        <taxon>Magnoliopsida</taxon>
        <taxon>eudicotyledons</taxon>
        <taxon>Gunneridae</taxon>
        <taxon>Pentapetalae</taxon>
        <taxon>rosids</taxon>
        <taxon>malvids</taxon>
        <taxon>Brassicales</taxon>
        <taxon>Brassicaceae</taxon>
        <taxon>Camelineae</taxon>
        <taxon>Arabidopsis</taxon>
    </lineage>
</organism>
<dbReference type="EMBL" id="AC011810">
    <property type="protein sequence ID" value="AAG09562.1"/>
    <property type="molecule type" value="Genomic_DNA"/>
</dbReference>
<dbReference type="EMBL" id="CP002684">
    <property type="protein sequence ID" value="AEE29021.1"/>
    <property type="molecule type" value="Genomic_DNA"/>
</dbReference>
<dbReference type="EMBL" id="CP002684">
    <property type="protein sequence ID" value="AEE29022.1"/>
    <property type="molecule type" value="Genomic_DNA"/>
</dbReference>
<dbReference type="EMBL" id="AY085069">
    <property type="protein sequence ID" value="AAM61625.1"/>
    <property type="molecule type" value="mRNA"/>
</dbReference>
<dbReference type="EMBL" id="BT026384">
    <property type="protein sequence ID" value="ABH04491.1"/>
    <property type="molecule type" value="mRNA"/>
</dbReference>
<dbReference type="RefSeq" id="NP_172803.1">
    <property type="nucleotide sequence ID" value="NM_101216.2"/>
</dbReference>
<dbReference type="RefSeq" id="NP_973816.1">
    <property type="nucleotide sequence ID" value="NM_202087.2"/>
</dbReference>
<dbReference type="SMR" id="Q8LF36"/>
<dbReference type="BioGRID" id="23146">
    <property type="interactions" value="2"/>
</dbReference>
<dbReference type="FunCoup" id="Q8LF36">
    <property type="interactions" value="3833"/>
</dbReference>
<dbReference type="STRING" id="3702.Q8LF36"/>
<dbReference type="PaxDb" id="3702-AT1G13460.2"/>
<dbReference type="ProteomicsDB" id="244608"/>
<dbReference type="EnsemblPlants" id="AT1G13460.1">
    <property type="protein sequence ID" value="AT1G13460.1"/>
    <property type="gene ID" value="AT1G13460"/>
</dbReference>
<dbReference type="EnsemblPlants" id="AT1G13460.2">
    <property type="protein sequence ID" value="AT1G13460.2"/>
    <property type="gene ID" value="AT1G13460"/>
</dbReference>
<dbReference type="GeneID" id="837906"/>
<dbReference type="Gramene" id="AT1G13460.1">
    <property type="protein sequence ID" value="AT1G13460.1"/>
    <property type="gene ID" value="AT1G13460"/>
</dbReference>
<dbReference type="Gramene" id="AT1G13460.2">
    <property type="protein sequence ID" value="AT1G13460.2"/>
    <property type="gene ID" value="AT1G13460"/>
</dbReference>
<dbReference type="KEGG" id="ath:AT1G13460"/>
<dbReference type="Araport" id="AT1G13460"/>
<dbReference type="TAIR" id="AT1G13460"/>
<dbReference type="eggNOG" id="KOG2085">
    <property type="taxonomic scope" value="Eukaryota"/>
</dbReference>
<dbReference type="HOGENOM" id="CLU_012437_4_1_1"/>
<dbReference type="InParanoid" id="Q8LF36"/>
<dbReference type="OMA" id="DSENTEW"/>
<dbReference type="PhylomeDB" id="Q8LF36"/>
<dbReference type="PRO" id="PR:Q8LF36"/>
<dbReference type="Proteomes" id="UP000006548">
    <property type="component" value="Chromosome 1"/>
</dbReference>
<dbReference type="ExpressionAtlas" id="Q8LF36">
    <property type="expression patterns" value="baseline and differential"/>
</dbReference>
<dbReference type="GO" id="GO:0005829">
    <property type="term" value="C:cytosol"/>
    <property type="evidence" value="ECO:0000314"/>
    <property type="project" value="UniProtKB"/>
</dbReference>
<dbReference type="GO" id="GO:0005777">
    <property type="term" value="C:peroxisome"/>
    <property type="evidence" value="ECO:0000314"/>
    <property type="project" value="TAIR"/>
</dbReference>
<dbReference type="GO" id="GO:0000159">
    <property type="term" value="C:protein phosphatase type 2A complex"/>
    <property type="evidence" value="ECO:0007669"/>
    <property type="project" value="InterPro"/>
</dbReference>
<dbReference type="GO" id="GO:0019888">
    <property type="term" value="F:protein phosphatase regulator activity"/>
    <property type="evidence" value="ECO:0007669"/>
    <property type="project" value="InterPro"/>
</dbReference>
<dbReference type="GO" id="GO:0009742">
    <property type="term" value="P:brassinosteroid mediated signaling pathway"/>
    <property type="evidence" value="ECO:0007669"/>
    <property type="project" value="UniProtKB-KW"/>
</dbReference>
<dbReference type="GO" id="GO:1900458">
    <property type="term" value="P:negative regulation of brassinosteroid mediated signaling pathway"/>
    <property type="evidence" value="ECO:0000314"/>
    <property type="project" value="UniProtKB"/>
</dbReference>
<dbReference type="GO" id="GO:0032000">
    <property type="term" value="P:positive regulation of fatty acid beta-oxidation"/>
    <property type="evidence" value="ECO:0000315"/>
    <property type="project" value="UniProtKB"/>
</dbReference>
<dbReference type="FunFam" id="1.25.10.10:FF:000041">
    <property type="entry name" value="Serine/threonine protein phosphatase 2A regulatory subunit"/>
    <property type="match status" value="1"/>
</dbReference>
<dbReference type="Gene3D" id="1.25.10.10">
    <property type="entry name" value="Leucine-rich Repeat Variant"/>
    <property type="match status" value="1"/>
</dbReference>
<dbReference type="InterPro" id="IPR011989">
    <property type="entry name" value="ARM-like"/>
</dbReference>
<dbReference type="InterPro" id="IPR016024">
    <property type="entry name" value="ARM-type_fold"/>
</dbReference>
<dbReference type="InterPro" id="IPR002554">
    <property type="entry name" value="PP2A_B56"/>
</dbReference>
<dbReference type="PANTHER" id="PTHR10257">
    <property type="entry name" value="SERINE/THREONINE PROTEIN PHOSPHATASE 2A PP2A REGULATORY SUBUNIT B"/>
    <property type="match status" value="1"/>
</dbReference>
<dbReference type="PANTHER" id="PTHR10257:SF73">
    <property type="entry name" value="SERINE_THREONINE PROTEIN PHOSPHATASE 2A 57 KDA REGULATORY SUBUNIT B' THETA ISOFORM"/>
    <property type="match status" value="1"/>
</dbReference>
<dbReference type="Pfam" id="PF01603">
    <property type="entry name" value="B56"/>
    <property type="match status" value="1"/>
</dbReference>
<dbReference type="PIRSF" id="PIRSF028043">
    <property type="entry name" value="PP2A_B56"/>
    <property type="match status" value="1"/>
</dbReference>
<dbReference type="SUPFAM" id="SSF48371">
    <property type="entry name" value="ARM repeat"/>
    <property type="match status" value="1"/>
</dbReference>
<evidence type="ECO:0000250" key="1">
    <source>
        <dbReference type="UniProtKB" id="Q13362"/>
    </source>
</evidence>
<evidence type="ECO:0000256" key="2">
    <source>
        <dbReference type="SAM" id="MobiDB-lite"/>
    </source>
</evidence>
<evidence type="ECO:0000269" key="3">
    <source>
    </source>
</evidence>
<evidence type="ECO:0000269" key="4">
    <source>
    </source>
</evidence>
<evidence type="ECO:0000269" key="5">
    <source>
    </source>
</evidence>
<evidence type="ECO:0000269" key="6">
    <source>
    </source>
</evidence>
<evidence type="ECO:0000305" key="7"/>
<proteinExistence type="evidence at protein level"/>
<protein>
    <recommendedName>
        <fullName>Serine/threonine protein phosphatase 2A 57 kDa regulatory subunit B' theta isoform</fullName>
        <shortName>AtB' theta</shortName>
        <shortName>PP2A, B' subunit, theta isoform</shortName>
    </recommendedName>
</protein>
<name>2A5T_ARATH</name>
<feature type="chain" id="PRO_0000071467" description="Serine/threonine protein phosphatase 2A 57 kDa regulatory subunit B' theta isoform">
    <location>
        <begin position="1"/>
        <end position="492"/>
    </location>
</feature>
<feature type="region of interest" description="Disordered" evidence="2">
    <location>
        <begin position="1"/>
        <end position="63"/>
    </location>
</feature>
<feature type="short sequence motif" description="Microbody targeting signal" evidence="3">
    <location>
        <begin position="490"/>
        <end position="492"/>
    </location>
</feature>
<feature type="compositionally biased region" description="Low complexity" evidence="2">
    <location>
        <begin position="16"/>
        <end position="39"/>
    </location>
</feature>
<feature type="mutagenesis site" description="Loss of peroxisomal targeting." evidence="3">
    <location>
        <begin position="489"/>
        <end position="492"/>
    </location>
</feature>
<feature type="sequence conflict" description="In Ref. 4; AAM61625." evidence="7" ref="4">
    <original>S</original>
    <variation>G</variation>
    <location>
        <position position="34"/>
    </location>
</feature>
<feature type="sequence conflict" description="In Ref. 4; AAM61625." evidence="7" ref="4">
    <original>Q</original>
    <variation>K</variation>
    <location>
        <position position="42"/>
    </location>
</feature>
<feature type="sequence conflict" description="In Ref. 4; AAM61625." evidence="7" ref="4">
    <original>Q</original>
    <variation>K</variation>
    <location>
        <position position="488"/>
    </location>
</feature>